<feature type="chain" id="PRO_0000287830" description="NADH-quinone oxidoreductase subunit M">
    <location>
        <begin position="1"/>
        <end position="509"/>
    </location>
</feature>
<feature type="transmembrane region" description="Helical" evidence="2">
    <location>
        <begin position="1"/>
        <end position="21"/>
    </location>
</feature>
<feature type="transmembrane region" description="Helical" evidence="2">
    <location>
        <begin position="30"/>
        <end position="50"/>
    </location>
</feature>
<feature type="transmembrane region" description="Helical" evidence="2">
    <location>
        <begin position="87"/>
        <end position="107"/>
    </location>
</feature>
<feature type="transmembrane region" description="Helical" evidence="2">
    <location>
        <begin position="123"/>
        <end position="143"/>
    </location>
</feature>
<feature type="transmembrane region" description="Helical" evidence="2">
    <location>
        <begin position="176"/>
        <end position="196"/>
    </location>
</feature>
<feature type="transmembrane region" description="Helical" evidence="2">
    <location>
        <begin position="223"/>
        <end position="243"/>
    </location>
</feature>
<feature type="transmembrane region" description="Helical" evidence="2">
    <location>
        <begin position="261"/>
        <end position="281"/>
    </location>
</feature>
<feature type="transmembrane region" description="Helical" evidence="2">
    <location>
        <begin position="288"/>
        <end position="308"/>
    </location>
</feature>
<feature type="transmembrane region" description="Helical" evidence="2">
    <location>
        <begin position="316"/>
        <end position="336"/>
    </location>
</feature>
<feature type="transmembrane region" description="Helical" evidence="2">
    <location>
        <begin position="342"/>
        <end position="362"/>
    </location>
</feature>
<feature type="transmembrane region" description="Helical" evidence="2">
    <location>
        <begin position="376"/>
        <end position="396"/>
    </location>
</feature>
<feature type="transmembrane region" description="Helical" evidence="2">
    <location>
        <begin position="422"/>
        <end position="442"/>
    </location>
</feature>
<feature type="transmembrane region" description="Helical" evidence="2">
    <location>
        <begin position="467"/>
        <end position="487"/>
    </location>
</feature>
<protein>
    <recommendedName>
        <fullName>NADH-quinone oxidoreductase subunit M</fullName>
        <ecNumber>7.1.1.-</ecNumber>
    </recommendedName>
    <alternativeName>
        <fullName>NADH dehydrogenase I subunit M</fullName>
    </alternativeName>
    <alternativeName>
        <fullName>NDH-1 subunit M</fullName>
    </alternativeName>
</protein>
<keyword id="KW-0997">Cell inner membrane</keyword>
<keyword id="KW-1003">Cell membrane</keyword>
<keyword id="KW-0472">Membrane</keyword>
<keyword id="KW-0520">NAD</keyword>
<keyword id="KW-0874">Quinone</keyword>
<keyword id="KW-1185">Reference proteome</keyword>
<keyword id="KW-1278">Translocase</keyword>
<keyword id="KW-0812">Transmembrane</keyword>
<keyword id="KW-1133">Transmembrane helix</keyword>
<keyword id="KW-0830">Ubiquinone</keyword>
<gene>
    <name type="primary">nuoM</name>
    <name type="ordered locus">PA2648</name>
</gene>
<dbReference type="EC" id="7.1.1.-"/>
<dbReference type="EMBL" id="AE004091">
    <property type="protein sequence ID" value="AAG06036.1"/>
    <property type="molecule type" value="Genomic_DNA"/>
</dbReference>
<dbReference type="PIR" id="E83315">
    <property type="entry name" value="E83315"/>
</dbReference>
<dbReference type="RefSeq" id="NP_251338.1">
    <property type="nucleotide sequence ID" value="NC_002516.2"/>
</dbReference>
<dbReference type="RefSeq" id="WP_003097684.1">
    <property type="nucleotide sequence ID" value="NZ_QZGE01000008.1"/>
</dbReference>
<dbReference type="SMR" id="Q9I0J0"/>
<dbReference type="FunCoup" id="Q9I0J0">
    <property type="interactions" value="156"/>
</dbReference>
<dbReference type="STRING" id="208964.PA2648"/>
<dbReference type="PaxDb" id="208964-PA2648"/>
<dbReference type="DNASU" id="882357"/>
<dbReference type="GeneID" id="882357"/>
<dbReference type="KEGG" id="pae:PA2648"/>
<dbReference type="PATRIC" id="fig|208964.12.peg.2771"/>
<dbReference type="PseudoCAP" id="PA2648"/>
<dbReference type="HOGENOM" id="CLU_007100_4_4_6"/>
<dbReference type="InParanoid" id="Q9I0J0"/>
<dbReference type="OrthoDB" id="9768329at2"/>
<dbReference type="PhylomeDB" id="Q9I0J0"/>
<dbReference type="BioCyc" id="PAER208964:G1FZ6-2688-MONOMER"/>
<dbReference type="Proteomes" id="UP000002438">
    <property type="component" value="Chromosome"/>
</dbReference>
<dbReference type="GO" id="GO:0005886">
    <property type="term" value="C:plasma membrane"/>
    <property type="evidence" value="ECO:0007669"/>
    <property type="project" value="UniProtKB-SubCell"/>
</dbReference>
<dbReference type="GO" id="GO:0045271">
    <property type="term" value="C:respiratory chain complex I"/>
    <property type="evidence" value="ECO:0000318"/>
    <property type="project" value="GO_Central"/>
</dbReference>
<dbReference type="GO" id="GO:0008137">
    <property type="term" value="F:NADH dehydrogenase (ubiquinone) activity"/>
    <property type="evidence" value="ECO:0007669"/>
    <property type="project" value="InterPro"/>
</dbReference>
<dbReference type="GO" id="GO:0048039">
    <property type="term" value="F:ubiquinone binding"/>
    <property type="evidence" value="ECO:0000318"/>
    <property type="project" value="GO_Central"/>
</dbReference>
<dbReference type="GO" id="GO:0009060">
    <property type="term" value="P:aerobic respiration"/>
    <property type="evidence" value="ECO:0000318"/>
    <property type="project" value="GO_Central"/>
</dbReference>
<dbReference type="GO" id="GO:0042773">
    <property type="term" value="P:ATP synthesis coupled electron transport"/>
    <property type="evidence" value="ECO:0007669"/>
    <property type="project" value="InterPro"/>
</dbReference>
<dbReference type="GO" id="GO:0015990">
    <property type="term" value="P:electron transport coupled proton transport"/>
    <property type="evidence" value="ECO:0000318"/>
    <property type="project" value="GO_Central"/>
</dbReference>
<dbReference type="InterPro" id="IPR010227">
    <property type="entry name" value="NADH_Q_OxRdtase_chainM/4"/>
</dbReference>
<dbReference type="InterPro" id="IPR003918">
    <property type="entry name" value="NADH_UbQ_OxRdtase"/>
</dbReference>
<dbReference type="InterPro" id="IPR001750">
    <property type="entry name" value="ND/Mrp_TM"/>
</dbReference>
<dbReference type="NCBIfam" id="TIGR01972">
    <property type="entry name" value="NDH_I_M"/>
    <property type="match status" value="1"/>
</dbReference>
<dbReference type="NCBIfam" id="NF004498">
    <property type="entry name" value="PRK05846.1-1"/>
    <property type="match status" value="1"/>
</dbReference>
<dbReference type="PANTHER" id="PTHR43507">
    <property type="entry name" value="NADH-UBIQUINONE OXIDOREDUCTASE CHAIN 4"/>
    <property type="match status" value="1"/>
</dbReference>
<dbReference type="PANTHER" id="PTHR43507:SF1">
    <property type="entry name" value="NADH-UBIQUINONE OXIDOREDUCTASE CHAIN 4"/>
    <property type="match status" value="1"/>
</dbReference>
<dbReference type="Pfam" id="PF00361">
    <property type="entry name" value="Proton_antipo_M"/>
    <property type="match status" value="1"/>
</dbReference>
<dbReference type="PRINTS" id="PR01437">
    <property type="entry name" value="NUOXDRDTASE4"/>
</dbReference>
<organism>
    <name type="scientific">Pseudomonas aeruginosa (strain ATCC 15692 / DSM 22644 / CIP 104116 / JCM 14847 / LMG 12228 / 1C / PRS 101 / PAO1)</name>
    <dbReference type="NCBI Taxonomy" id="208964"/>
    <lineage>
        <taxon>Bacteria</taxon>
        <taxon>Pseudomonadati</taxon>
        <taxon>Pseudomonadota</taxon>
        <taxon>Gammaproteobacteria</taxon>
        <taxon>Pseudomonadales</taxon>
        <taxon>Pseudomonadaceae</taxon>
        <taxon>Pseudomonas</taxon>
    </lineage>
</organism>
<comment type="function">
    <text evidence="1">NDH-1 shuttles electrons from NADH, via FMN and iron-sulfur (Fe-S) centers, to quinones in the respiratory chain. The immediate electron acceptor for the enzyme in this species is believed to be ubiquinone. Couples the redox reaction to proton translocation (for every two electrons transferred, four hydrogen ions are translocated across the cytoplasmic membrane), and thus conserves the redox energy in a proton gradient (By similarity).</text>
</comment>
<comment type="catalytic activity">
    <reaction>
        <text>a quinone + NADH + 5 H(+)(in) = a quinol + NAD(+) + 4 H(+)(out)</text>
        <dbReference type="Rhea" id="RHEA:57888"/>
        <dbReference type="ChEBI" id="CHEBI:15378"/>
        <dbReference type="ChEBI" id="CHEBI:24646"/>
        <dbReference type="ChEBI" id="CHEBI:57540"/>
        <dbReference type="ChEBI" id="CHEBI:57945"/>
        <dbReference type="ChEBI" id="CHEBI:132124"/>
    </reaction>
</comment>
<comment type="subunit">
    <text evidence="1">Composed of 13 different subunits. Subunits NuoA, H, J, K, L, M, N constitute the membrane sector of the complex (By similarity).</text>
</comment>
<comment type="subcellular location">
    <subcellularLocation>
        <location evidence="1">Cell inner membrane</location>
        <topology evidence="1">Multi-pass membrane protein</topology>
    </subcellularLocation>
</comment>
<comment type="similarity">
    <text evidence="3">Belongs to the complex I subunit 4 family.</text>
</comment>
<proteinExistence type="inferred from homology"/>
<sequence>MILPWLILIPFIGGFLCWIAEHSSKTLPRWIALLSMTLVLILSLWIWATGDFQLAPAPGGEPEWTLQFKVLWIERLGISIHLAMDGLSLLMVALTGLLGVLSVLCSWNEIQRRIGFFHLNLLWILGGVIGVFLAIDLFLFFFFWEMMLVPMYFLIALWGHSSDDGKKTRIYAATKFFIFTQASGLVMLVAILGLVFVNFNATGVITFDYATLLKTQLSPHVEWLLMLGFFVAFAVKMPVVPVHSWLPDAHAQAPTAGSVDLAGILLKTAAYGLIRFALPLFPNASAEFAPIAMWLGIIGIFYGALLSFAQTDIKRLVAYSSVSHMGFVMIGIYSGSQVALQGVVVQMIAHGLSAAALFILCGQLYERLHTRDMRKMGGLWSRMPYLPAISLFFASASLGLPGTGNFVGEFLILIGAFKVVPVIIVIATFGLVFASVYSLIMIHRAYFGPSQSDEPILGLDARELSMVLGLAVLLVLLGVYPQPVLDISAASMHGVQQWLGAALSTLAGR</sequence>
<name>NUOM_PSEAE</name>
<reference key="1">
    <citation type="journal article" date="2000" name="Nature">
        <title>Complete genome sequence of Pseudomonas aeruginosa PAO1, an opportunistic pathogen.</title>
        <authorList>
            <person name="Stover C.K."/>
            <person name="Pham X.-Q.T."/>
            <person name="Erwin A.L."/>
            <person name="Mizoguchi S.D."/>
            <person name="Warrener P."/>
            <person name="Hickey M.J."/>
            <person name="Brinkman F.S.L."/>
            <person name="Hufnagle W.O."/>
            <person name="Kowalik D.J."/>
            <person name="Lagrou M."/>
            <person name="Garber R.L."/>
            <person name="Goltry L."/>
            <person name="Tolentino E."/>
            <person name="Westbrock-Wadman S."/>
            <person name="Yuan Y."/>
            <person name="Brody L.L."/>
            <person name="Coulter S.N."/>
            <person name="Folger K.R."/>
            <person name="Kas A."/>
            <person name="Larbig K."/>
            <person name="Lim R.M."/>
            <person name="Smith K.A."/>
            <person name="Spencer D.H."/>
            <person name="Wong G.K.-S."/>
            <person name="Wu Z."/>
            <person name="Paulsen I.T."/>
            <person name="Reizer J."/>
            <person name="Saier M.H. Jr."/>
            <person name="Hancock R.E.W."/>
            <person name="Lory S."/>
            <person name="Olson M.V."/>
        </authorList>
    </citation>
    <scope>NUCLEOTIDE SEQUENCE [LARGE SCALE GENOMIC DNA]</scope>
    <source>
        <strain>ATCC 15692 / DSM 22644 / CIP 104116 / JCM 14847 / LMG 12228 / 1C / PRS 101 / PAO1</strain>
    </source>
</reference>
<accession>Q9I0J0</accession>
<evidence type="ECO:0000250" key="1"/>
<evidence type="ECO:0000255" key="2"/>
<evidence type="ECO:0000305" key="3"/>